<keyword id="KW-0007">Acetylation</keyword>
<keyword id="KW-0030">Aminoacyl-tRNA synthetase</keyword>
<keyword id="KW-0067">ATP-binding</keyword>
<keyword id="KW-0963">Cytoplasm</keyword>
<keyword id="KW-0436">Ligase</keyword>
<keyword id="KW-0479">Metal-binding</keyword>
<keyword id="KW-0547">Nucleotide-binding</keyword>
<keyword id="KW-0648">Protein biosynthesis</keyword>
<keyword id="KW-0862">Zinc</keyword>
<organism>
    <name type="scientific">Escherichia coli (strain SE11)</name>
    <dbReference type="NCBI Taxonomy" id="409438"/>
    <lineage>
        <taxon>Bacteria</taxon>
        <taxon>Pseudomonadati</taxon>
        <taxon>Pseudomonadota</taxon>
        <taxon>Gammaproteobacteria</taxon>
        <taxon>Enterobacterales</taxon>
        <taxon>Enterobacteriaceae</taxon>
        <taxon>Escherichia</taxon>
    </lineage>
</organism>
<accession>B6HZ21</accession>
<proteinExistence type="inferred from homology"/>
<gene>
    <name evidence="1" type="primary">ileS</name>
    <name type="ordered locus">ECSE_0024</name>
</gene>
<sequence length="938" mass="104297">MSDYKSTLNLPETGFPMRGDLAKREPGMLARWTDDDLYGIIRAAKKGKKTFILHDGPPYANGSIHIGHSVNKILKDIIVKSKGLSGYDSPYVPGWDCHGLPIELKVEQEYGKPGEKFTAAEFRAKCREYAATQVDGQRKDFIRLGVLGDWSHPYLTMDFKTEANIIRALGKIIGNGHLHKGAKPVHWCVDCRSALAEAEVEYYDKTSPSIDVAFQAVDQDALKAKFAVSNVNGPISLVIWTTTPWTLPANRAISIAPDFDYALVQIDGQAVILAKDLVESVMQRIGVTDYTILGTVKGAELELLRFTHPFMGFDVPAILGDHVTLDAGTGAVHTAPGHGPDDYVIGQKYGLETANPVGPDGTYLPGTYPTLDGVNVFKANDIVVALLQEKGALLHVEKMQHSYPCCWRHKTPIIFRATPQWFVSMDQKGLRAQSLKEIKGVQWIPDWGQARIESMVANRPDWCISRQRTWGVPMSLFVHKDTEELHPRTLELMEEVAKRVEVDGIQAWWDLDAKEILGDEADQYVKVPDTLDVWFDSGSTHSSVVDVRPEFAGHAADMYLEGSDQHRGWFMSSLMISTAMKGKAPYRQVLTHGFTVDGQGRKMSKSIGNTVSPQDVMNKLGADILRLWVASTDYTGEMAVSDEILKRAADSYRRIRNTARFLLANLNGFDPAKDMVKPEEMVVLDRWAVGCAKAAQEDILKAYEAYDFHEVVQRLMRFCSVEMGSFYLDIIKDRQYTAKADSVARRSCQTALYHIAEALVRWMAPILSFTADEVWGYLPGEREKYVFTGEWYEGLFGLADSEAMNDAFWDELLKVRGEVNKVIEQARADKKVGGSLEAAVTLYAEPELSAKLTALGDELRFVLLTSGATVADYNDAPADAQQSEVLKGLKVALSKAEGEKCPRCWHYTQDVGKVAEHAEICGRCVSNVAGDGEKRKFA</sequence>
<reference key="1">
    <citation type="journal article" date="2008" name="DNA Res.">
        <title>Complete genome sequence and comparative analysis of the wild-type commensal Escherichia coli strain SE11 isolated from a healthy adult.</title>
        <authorList>
            <person name="Oshima K."/>
            <person name="Toh H."/>
            <person name="Ogura Y."/>
            <person name="Sasamoto H."/>
            <person name="Morita H."/>
            <person name="Park S.-H."/>
            <person name="Ooka T."/>
            <person name="Iyoda S."/>
            <person name="Taylor T.D."/>
            <person name="Hayashi T."/>
            <person name="Itoh K."/>
            <person name="Hattori M."/>
        </authorList>
    </citation>
    <scope>NUCLEOTIDE SEQUENCE [LARGE SCALE GENOMIC DNA]</scope>
    <source>
        <strain>SE11</strain>
    </source>
</reference>
<evidence type="ECO:0000255" key="1">
    <source>
        <dbReference type="HAMAP-Rule" id="MF_02002"/>
    </source>
</evidence>
<name>SYI_ECOSE</name>
<comment type="function">
    <text evidence="1">Catalyzes the attachment of isoleucine to tRNA(Ile). As IleRS can inadvertently accommodate and process structurally similar amino acids such as valine, to avoid such errors it has two additional distinct tRNA(Ile)-dependent editing activities. One activity is designated as 'pretransfer' editing and involves the hydrolysis of activated Val-AMP. The other activity is designated 'posttransfer' editing and involves deacylation of mischarged Val-tRNA(Ile).</text>
</comment>
<comment type="catalytic activity">
    <reaction evidence="1">
        <text>tRNA(Ile) + L-isoleucine + ATP = L-isoleucyl-tRNA(Ile) + AMP + diphosphate</text>
        <dbReference type="Rhea" id="RHEA:11060"/>
        <dbReference type="Rhea" id="RHEA-COMP:9666"/>
        <dbReference type="Rhea" id="RHEA-COMP:9695"/>
        <dbReference type="ChEBI" id="CHEBI:30616"/>
        <dbReference type="ChEBI" id="CHEBI:33019"/>
        <dbReference type="ChEBI" id="CHEBI:58045"/>
        <dbReference type="ChEBI" id="CHEBI:78442"/>
        <dbReference type="ChEBI" id="CHEBI:78528"/>
        <dbReference type="ChEBI" id="CHEBI:456215"/>
        <dbReference type="EC" id="6.1.1.5"/>
    </reaction>
</comment>
<comment type="cofactor">
    <cofactor evidence="1">
        <name>Zn(2+)</name>
        <dbReference type="ChEBI" id="CHEBI:29105"/>
    </cofactor>
    <text evidence="1">Binds 1 zinc ion per subunit.</text>
</comment>
<comment type="subunit">
    <text evidence="1">Monomer.</text>
</comment>
<comment type="subcellular location">
    <subcellularLocation>
        <location evidence="1">Cytoplasm</location>
    </subcellularLocation>
</comment>
<comment type="domain">
    <text evidence="1">IleRS has two distinct active sites: one for aminoacylation and one for editing. The misactivated valine is translocated from the active site to the editing site, which sterically excludes the correctly activated isoleucine. The single editing site contains two valyl binding pockets, one specific for each substrate (Val-AMP or Val-tRNA(Ile)).</text>
</comment>
<comment type="similarity">
    <text evidence="1">Belongs to the class-I aminoacyl-tRNA synthetase family. IleS type 1 subfamily.</text>
</comment>
<dbReference type="EC" id="6.1.1.5" evidence="1"/>
<dbReference type="EMBL" id="AP009240">
    <property type="protein sequence ID" value="BAG75548.1"/>
    <property type="molecule type" value="Genomic_DNA"/>
</dbReference>
<dbReference type="RefSeq" id="WP_001286857.1">
    <property type="nucleotide sequence ID" value="NC_011415.1"/>
</dbReference>
<dbReference type="SMR" id="B6HZ21"/>
<dbReference type="GeneID" id="93777410"/>
<dbReference type="KEGG" id="ecy:ECSE_0024"/>
<dbReference type="HOGENOM" id="CLU_001493_7_1_6"/>
<dbReference type="Proteomes" id="UP000008199">
    <property type="component" value="Chromosome"/>
</dbReference>
<dbReference type="GO" id="GO:0005829">
    <property type="term" value="C:cytosol"/>
    <property type="evidence" value="ECO:0007669"/>
    <property type="project" value="TreeGrafter"/>
</dbReference>
<dbReference type="GO" id="GO:0002161">
    <property type="term" value="F:aminoacyl-tRNA deacylase activity"/>
    <property type="evidence" value="ECO:0007669"/>
    <property type="project" value="InterPro"/>
</dbReference>
<dbReference type="GO" id="GO:0005524">
    <property type="term" value="F:ATP binding"/>
    <property type="evidence" value="ECO:0007669"/>
    <property type="project" value="UniProtKB-UniRule"/>
</dbReference>
<dbReference type="GO" id="GO:0004822">
    <property type="term" value="F:isoleucine-tRNA ligase activity"/>
    <property type="evidence" value="ECO:0007669"/>
    <property type="project" value="UniProtKB-UniRule"/>
</dbReference>
<dbReference type="GO" id="GO:0000049">
    <property type="term" value="F:tRNA binding"/>
    <property type="evidence" value="ECO:0007669"/>
    <property type="project" value="InterPro"/>
</dbReference>
<dbReference type="GO" id="GO:0008270">
    <property type="term" value="F:zinc ion binding"/>
    <property type="evidence" value="ECO:0007669"/>
    <property type="project" value="UniProtKB-UniRule"/>
</dbReference>
<dbReference type="GO" id="GO:0006428">
    <property type="term" value="P:isoleucyl-tRNA aminoacylation"/>
    <property type="evidence" value="ECO:0007669"/>
    <property type="project" value="UniProtKB-UniRule"/>
</dbReference>
<dbReference type="CDD" id="cd07960">
    <property type="entry name" value="Anticodon_Ia_Ile_BEm"/>
    <property type="match status" value="1"/>
</dbReference>
<dbReference type="CDD" id="cd00818">
    <property type="entry name" value="IleRS_core"/>
    <property type="match status" value="1"/>
</dbReference>
<dbReference type="FunFam" id="1.10.730.20:FF:000001">
    <property type="entry name" value="Isoleucine--tRNA ligase"/>
    <property type="match status" value="1"/>
</dbReference>
<dbReference type="FunFam" id="3.40.50.620:FF:000042">
    <property type="entry name" value="Isoleucine--tRNA ligase"/>
    <property type="match status" value="1"/>
</dbReference>
<dbReference type="FunFam" id="3.40.50.620:FF:000048">
    <property type="entry name" value="Isoleucine--tRNA ligase"/>
    <property type="match status" value="1"/>
</dbReference>
<dbReference type="FunFam" id="3.90.740.10:FF:000002">
    <property type="entry name" value="Isoleucine--tRNA ligase"/>
    <property type="match status" value="1"/>
</dbReference>
<dbReference type="Gene3D" id="1.10.730.20">
    <property type="match status" value="1"/>
</dbReference>
<dbReference type="Gene3D" id="3.40.50.620">
    <property type="entry name" value="HUPs"/>
    <property type="match status" value="2"/>
</dbReference>
<dbReference type="Gene3D" id="3.90.740.10">
    <property type="entry name" value="Valyl/Leucyl/Isoleucyl-tRNA synthetase, editing domain"/>
    <property type="match status" value="1"/>
</dbReference>
<dbReference type="HAMAP" id="MF_02002">
    <property type="entry name" value="Ile_tRNA_synth_type1"/>
    <property type="match status" value="1"/>
</dbReference>
<dbReference type="InterPro" id="IPR001412">
    <property type="entry name" value="aa-tRNA-synth_I_CS"/>
</dbReference>
<dbReference type="InterPro" id="IPR002300">
    <property type="entry name" value="aa-tRNA-synth_Ia"/>
</dbReference>
<dbReference type="InterPro" id="IPR033708">
    <property type="entry name" value="Anticodon_Ile_BEm"/>
</dbReference>
<dbReference type="InterPro" id="IPR002301">
    <property type="entry name" value="Ile-tRNA-ligase"/>
</dbReference>
<dbReference type="InterPro" id="IPR023585">
    <property type="entry name" value="Ile-tRNA-ligase_type1"/>
</dbReference>
<dbReference type="InterPro" id="IPR050081">
    <property type="entry name" value="Ile-tRNA_ligase"/>
</dbReference>
<dbReference type="InterPro" id="IPR013155">
    <property type="entry name" value="M/V/L/I-tRNA-synth_anticd-bd"/>
</dbReference>
<dbReference type="InterPro" id="IPR014729">
    <property type="entry name" value="Rossmann-like_a/b/a_fold"/>
</dbReference>
<dbReference type="InterPro" id="IPR009080">
    <property type="entry name" value="tRNAsynth_Ia_anticodon-bd"/>
</dbReference>
<dbReference type="InterPro" id="IPR009008">
    <property type="entry name" value="Val/Leu/Ile-tRNA-synth_edit"/>
</dbReference>
<dbReference type="InterPro" id="IPR010663">
    <property type="entry name" value="Znf_FPG/IleRS"/>
</dbReference>
<dbReference type="NCBIfam" id="TIGR00392">
    <property type="entry name" value="ileS"/>
    <property type="match status" value="1"/>
</dbReference>
<dbReference type="PANTHER" id="PTHR42765:SF1">
    <property type="entry name" value="ISOLEUCINE--TRNA LIGASE, MITOCHONDRIAL"/>
    <property type="match status" value="1"/>
</dbReference>
<dbReference type="PANTHER" id="PTHR42765">
    <property type="entry name" value="SOLEUCYL-TRNA SYNTHETASE"/>
    <property type="match status" value="1"/>
</dbReference>
<dbReference type="Pfam" id="PF08264">
    <property type="entry name" value="Anticodon_1"/>
    <property type="match status" value="1"/>
</dbReference>
<dbReference type="Pfam" id="PF00133">
    <property type="entry name" value="tRNA-synt_1"/>
    <property type="match status" value="1"/>
</dbReference>
<dbReference type="Pfam" id="PF06827">
    <property type="entry name" value="zf-FPG_IleRS"/>
    <property type="match status" value="1"/>
</dbReference>
<dbReference type="PRINTS" id="PR00984">
    <property type="entry name" value="TRNASYNTHILE"/>
</dbReference>
<dbReference type="SUPFAM" id="SSF47323">
    <property type="entry name" value="Anticodon-binding domain of a subclass of class I aminoacyl-tRNA synthetases"/>
    <property type="match status" value="1"/>
</dbReference>
<dbReference type="SUPFAM" id="SSF52374">
    <property type="entry name" value="Nucleotidylyl transferase"/>
    <property type="match status" value="1"/>
</dbReference>
<dbReference type="SUPFAM" id="SSF50677">
    <property type="entry name" value="ValRS/IleRS/LeuRS editing domain"/>
    <property type="match status" value="1"/>
</dbReference>
<dbReference type="PROSITE" id="PS00178">
    <property type="entry name" value="AA_TRNA_LIGASE_I"/>
    <property type="match status" value="1"/>
</dbReference>
<feature type="chain" id="PRO_1000189162" description="Isoleucine--tRNA ligase">
    <location>
        <begin position="1"/>
        <end position="938"/>
    </location>
</feature>
<feature type="short sequence motif" description="'HIGH' region">
    <location>
        <begin position="58"/>
        <end position="68"/>
    </location>
</feature>
<feature type="short sequence motif" description="'KMSKS' region">
    <location>
        <begin position="602"/>
        <end position="606"/>
    </location>
</feature>
<feature type="binding site" evidence="1">
    <location>
        <position position="561"/>
    </location>
    <ligand>
        <name>L-isoleucyl-5'-AMP</name>
        <dbReference type="ChEBI" id="CHEBI:178002"/>
    </ligand>
</feature>
<feature type="binding site" evidence="1">
    <location>
        <position position="605"/>
    </location>
    <ligand>
        <name>ATP</name>
        <dbReference type="ChEBI" id="CHEBI:30616"/>
    </ligand>
</feature>
<feature type="binding site" evidence="1">
    <location>
        <position position="901"/>
    </location>
    <ligand>
        <name>Zn(2+)</name>
        <dbReference type="ChEBI" id="CHEBI:29105"/>
    </ligand>
</feature>
<feature type="binding site" evidence="1">
    <location>
        <position position="904"/>
    </location>
    <ligand>
        <name>Zn(2+)</name>
        <dbReference type="ChEBI" id="CHEBI:29105"/>
    </ligand>
</feature>
<feature type="binding site" evidence="1">
    <location>
        <position position="921"/>
    </location>
    <ligand>
        <name>Zn(2+)</name>
        <dbReference type="ChEBI" id="CHEBI:29105"/>
    </ligand>
</feature>
<feature type="binding site" evidence="1">
    <location>
        <position position="924"/>
    </location>
    <ligand>
        <name>Zn(2+)</name>
        <dbReference type="ChEBI" id="CHEBI:29105"/>
    </ligand>
</feature>
<feature type="modified residue" description="N6-acetyllysine" evidence="1">
    <location>
        <position position="183"/>
    </location>
</feature>
<protein>
    <recommendedName>
        <fullName evidence="1">Isoleucine--tRNA ligase</fullName>
        <ecNumber evidence="1">6.1.1.5</ecNumber>
    </recommendedName>
    <alternativeName>
        <fullName evidence="1">Isoleucyl-tRNA synthetase</fullName>
        <shortName evidence="1">IleRS</shortName>
    </alternativeName>
</protein>